<evidence type="ECO:0000250" key="1">
    <source>
        <dbReference type="UniProtKB" id="Q9HC16"/>
    </source>
</evidence>
<evidence type="ECO:0000255" key="2">
    <source>
        <dbReference type="PROSITE-ProRule" id="PRU01083"/>
    </source>
</evidence>
<evidence type="ECO:0000305" key="3"/>
<keyword id="KW-0051">Antiviral defense</keyword>
<keyword id="KW-0963">Cytoplasm</keyword>
<keyword id="KW-0378">Hydrolase</keyword>
<keyword id="KW-0391">Immunity</keyword>
<keyword id="KW-0399">Innate immunity</keyword>
<keyword id="KW-0479">Metal-binding</keyword>
<keyword id="KW-0539">Nucleus</keyword>
<keyword id="KW-0597">Phosphoprotein</keyword>
<keyword id="KW-0677">Repeat</keyword>
<keyword id="KW-0862">Zinc</keyword>
<protein>
    <recommendedName>
        <fullName evidence="1">DNA dC-&gt;dU-editing enzyme APOBEC-3G</fullName>
        <ecNumber evidence="1">3.5.4.38</ecNumber>
    </recommendedName>
    <alternativeName>
        <fullName>Deoxycytidine deaminase</fullName>
    </alternativeName>
</protein>
<name>ABC3G_MACNG</name>
<dbReference type="EC" id="3.5.4.38" evidence="1"/>
<dbReference type="EMBL" id="AY622529">
    <property type="protein sequence ID" value="AAT44391.1"/>
    <property type="molecule type" value="Genomic_DNA"/>
</dbReference>
<dbReference type="EMBL" id="AY622522">
    <property type="protein sequence ID" value="AAT44391.1"/>
    <property type="status" value="JOINED"/>
    <property type="molecule type" value="Genomic_DNA"/>
</dbReference>
<dbReference type="EMBL" id="AY622523">
    <property type="protein sequence ID" value="AAT44391.1"/>
    <property type="status" value="JOINED"/>
    <property type="molecule type" value="Genomic_DNA"/>
</dbReference>
<dbReference type="EMBL" id="AY622524">
    <property type="protein sequence ID" value="AAT44391.1"/>
    <property type="status" value="JOINED"/>
    <property type="molecule type" value="Genomic_DNA"/>
</dbReference>
<dbReference type="EMBL" id="AY622525">
    <property type="protein sequence ID" value="AAT44391.1"/>
    <property type="status" value="JOINED"/>
    <property type="molecule type" value="Genomic_DNA"/>
</dbReference>
<dbReference type="EMBL" id="AY622526">
    <property type="protein sequence ID" value="AAT44391.1"/>
    <property type="status" value="JOINED"/>
    <property type="molecule type" value="Genomic_DNA"/>
</dbReference>
<dbReference type="EMBL" id="AY622527">
    <property type="protein sequence ID" value="AAT44391.1"/>
    <property type="status" value="JOINED"/>
    <property type="molecule type" value="Genomic_DNA"/>
</dbReference>
<dbReference type="EMBL" id="AY622528">
    <property type="protein sequence ID" value="AAT44391.1"/>
    <property type="status" value="JOINED"/>
    <property type="molecule type" value="Genomic_DNA"/>
</dbReference>
<dbReference type="SMR" id="Q694C4"/>
<dbReference type="GO" id="GO:0005737">
    <property type="term" value="C:cytoplasm"/>
    <property type="evidence" value="ECO:0000250"/>
    <property type="project" value="UniProtKB"/>
</dbReference>
<dbReference type="GO" id="GO:0005634">
    <property type="term" value="C:nucleus"/>
    <property type="evidence" value="ECO:0007669"/>
    <property type="project" value="UniProtKB-SubCell"/>
</dbReference>
<dbReference type="GO" id="GO:0000932">
    <property type="term" value="C:P-body"/>
    <property type="evidence" value="ECO:0000250"/>
    <property type="project" value="UniProtKB"/>
</dbReference>
<dbReference type="GO" id="GO:1990904">
    <property type="term" value="C:ribonucleoprotein complex"/>
    <property type="evidence" value="ECO:0000250"/>
    <property type="project" value="UniProtKB"/>
</dbReference>
<dbReference type="GO" id="GO:0004126">
    <property type="term" value="F:cytidine deaminase activity"/>
    <property type="evidence" value="ECO:0000250"/>
    <property type="project" value="UniProtKB"/>
</dbReference>
<dbReference type="GO" id="GO:0003723">
    <property type="term" value="F:RNA binding"/>
    <property type="evidence" value="ECO:0007669"/>
    <property type="project" value="TreeGrafter"/>
</dbReference>
<dbReference type="GO" id="GO:0008270">
    <property type="term" value="F:zinc ion binding"/>
    <property type="evidence" value="ECO:0007669"/>
    <property type="project" value="InterPro"/>
</dbReference>
<dbReference type="GO" id="GO:0009972">
    <property type="term" value="P:cytidine deamination"/>
    <property type="evidence" value="ECO:0000250"/>
    <property type="project" value="UniProtKB"/>
</dbReference>
<dbReference type="GO" id="GO:0016554">
    <property type="term" value="P:cytidine to uridine editing"/>
    <property type="evidence" value="ECO:0007669"/>
    <property type="project" value="TreeGrafter"/>
</dbReference>
<dbReference type="GO" id="GO:0051607">
    <property type="term" value="P:defense response to virus"/>
    <property type="evidence" value="ECO:0000250"/>
    <property type="project" value="UniProtKB"/>
</dbReference>
<dbReference type="GO" id="GO:0070383">
    <property type="term" value="P:DNA cytosine deamination"/>
    <property type="evidence" value="ECO:0007669"/>
    <property type="project" value="TreeGrafter"/>
</dbReference>
<dbReference type="GO" id="GO:0045087">
    <property type="term" value="P:innate immune response"/>
    <property type="evidence" value="ECO:0007669"/>
    <property type="project" value="UniProtKB-KW"/>
</dbReference>
<dbReference type="GO" id="GO:0045869">
    <property type="term" value="P:negative regulation of single stranded viral RNA replication via double stranded DNA intermediate"/>
    <property type="evidence" value="ECO:0007669"/>
    <property type="project" value="TreeGrafter"/>
</dbReference>
<dbReference type="GO" id="GO:0010526">
    <property type="term" value="P:transposable element silencing"/>
    <property type="evidence" value="ECO:0000250"/>
    <property type="project" value="UniProtKB"/>
</dbReference>
<dbReference type="CDD" id="cd01283">
    <property type="entry name" value="cytidine_deaminase"/>
    <property type="match status" value="2"/>
</dbReference>
<dbReference type="FunFam" id="3.40.140.10:FF:000029">
    <property type="entry name" value="DNA dC-&gt;dU-editing enzyme APOBEC-3G"/>
    <property type="match status" value="2"/>
</dbReference>
<dbReference type="Gene3D" id="3.40.140.10">
    <property type="entry name" value="Cytidine Deaminase, domain 2"/>
    <property type="match status" value="2"/>
</dbReference>
<dbReference type="InterPro" id="IPR016192">
    <property type="entry name" value="APOBEC/CMP_deaminase_Zn-bd"/>
</dbReference>
<dbReference type="InterPro" id="IPR050610">
    <property type="entry name" value="APOBEC_Cyt_Deaminase"/>
</dbReference>
<dbReference type="InterPro" id="IPR002125">
    <property type="entry name" value="CMP_dCMP_dom"/>
</dbReference>
<dbReference type="InterPro" id="IPR016193">
    <property type="entry name" value="Cytidine_deaminase-like"/>
</dbReference>
<dbReference type="PANTHER" id="PTHR13857:SF20">
    <property type="entry name" value="DNA DC-DU-EDITING ENZYME APOBEC-3G"/>
    <property type="match status" value="1"/>
</dbReference>
<dbReference type="PANTHER" id="PTHR13857">
    <property type="entry name" value="MRNA EDITING ENZYME"/>
    <property type="match status" value="1"/>
</dbReference>
<dbReference type="Pfam" id="PF18782">
    <property type="entry name" value="NAD2"/>
    <property type="match status" value="2"/>
</dbReference>
<dbReference type="SUPFAM" id="SSF53927">
    <property type="entry name" value="Cytidine deaminase-like"/>
    <property type="match status" value="2"/>
</dbReference>
<dbReference type="PROSITE" id="PS00903">
    <property type="entry name" value="CYT_DCMP_DEAMINASES_1"/>
    <property type="match status" value="1"/>
</dbReference>
<dbReference type="PROSITE" id="PS51747">
    <property type="entry name" value="CYT_DCMP_DEAMINASES_2"/>
    <property type="match status" value="2"/>
</dbReference>
<accession>Q694C4</accession>
<proteinExistence type="inferred from homology"/>
<reference key="1">
    <citation type="journal article" date="2004" name="PLoS Biol.">
        <title>Ancient adaptive evolution of the primate antiviral DNA-editing enzyme APOBEC3G.</title>
        <authorList>
            <person name="Sawyer S.L."/>
            <person name="Emerman M."/>
            <person name="Malik H.S."/>
        </authorList>
    </citation>
    <scope>NUCLEOTIDE SEQUENCE [GENOMIC DNA]</scope>
</reference>
<feature type="chain" id="PRO_0000171765" description="DNA dC-&gt;dU-editing enzyme APOBEC-3G">
    <location>
        <begin position="1"/>
        <end position="383"/>
    </location>
</feature>
<feature type="domain" description="CMP/dCMP-type deaminase 1" evidence="2">
    <location>
        <begin position="29"/>
        <end position="138"/>
    </location>
</feature>
<feature type="domain" description="CMP/dCMP-type deaminase 2" evidence="2">
    <location>
        <begin position="214"/>
        <end position="327"/>
    </location>
</feature>
<feature type="region of interest" description="Essential for cytoplasmic localization" evidence="3">
    <location>
        <begin position="1"/>
        <end position="60"/>
    </location>
</feature>
<feature type="region of interest" description="Necessary for homooligomerization" evidence="3">
    <location>
        <begin position="209"/>
        <end position="335"/>
    </location>
</feature>
<feature type="region of interest" description="Interaction with DNA" evidence="3">
    <location>
        <begin position="213"/>
        <end position="215"/>
    </location>
</feature>
<feature type="region of interest" description="Interaction with DNA" evidence="3">
    <location>
        <begin position="312"/>
        <end position="319"/>
    </location>
</feature>
<feature type="active site" description="Proton donor" evidence="2">
    <location>
        <position position="259"/>
    </location>
</feature>
<feature type="binding site" evidence="2">
    <location>
        <position position="65"/>
    </location>
    <ligand>
        <name>Zn(2+)</name>
        <dbReference type="ChEBI" id="CHEBI:29105"/>
        <label>1</label>
    </ligand>
</feature>
<feature type="binding site" evidence="2">
    <location>
        <position position="97"/>
    </location>
    <ligand>
        <name>Zn(2+)</name>
        <dbReference type="ChEBI" id="CHEBI:29105"/>
        <label>1</label>
    </ligand>
</feature>
<feature type="binding site" evidence="2">
    <location>
        <position position="100"/>
    </location>
    <ligand>
        <name>Zn(2+)</name>
        <dbReference type="ChEBI" id="CHEBI:29105"/>
        <label>1</label>
    </ligand>
</feature>
<feature type="binding site" evidence="1">
    <location>
        <position position="257"/>
    </location>
    <ligand>
        <name>Zn(2+)</name>
        <dbReference type="ChEBI" id="CHEBI:29105"/>
        <label>2</label>
        <note>catalytic</note>
    </ligand>
</feature>
<feature type="binding site" evidence="1">
    <location>
        <position position="287"/>
    </location>
    <ligand>
        <name>Zn(2+)</name>
        <dbReference type="ChEBI" id="CHEBI:29105"/>
        <label>2</label>
        <note>catalytic</note>
    </ligand>
</feature>
<feature type="binding site" evidence="1">
    <location>
        <position position="290"/>
    </location>
    <ligand>
        <name>Zn(2+)</name>
        <dbReference type="ChEBI" id="CHEBI:29105"/>
        <label>2</label>
        <note>catalytic</note>
    </ligand>
</feature>
<feature type="site" description="Interaction with DNA" evidence="3">
    <location>
        <position position="244"/>
    </location>
</feature>
<feature type="modified residue" description="Phosphothreonine; by PKA" evidence="1">
    <location>
        <position position="32"/>
    </location>
</feature>
<feature type="modified residue" description="Phosphothreonine; by PKA and CAMK2" evidence="1">
    <location>
        <position position="218"/>
    </location>
</feature>
<organism>
    <name type="scientific">Macaca nigra</name>
    <name type="common">Celebes black macaque</name>
    <name type="synonym">Crested black macaque</name>
    <dbReference type="NCBI Taxonomy" id="54600"/>
    <lineage>
        <taxon>Eukaryota</taxon>
        <taxon>Metazoa</taxon>
        <taxon>Chordata</taxon>
        <taxon>Craniata</taxon>
        <taxon>Vertebrata</taxon>
        <taxon>Euteleostomi</taxon>
        <taxon>Mammalia</taxon>
        <taxon>Eutheria</taxon>
        <taxon>Euarchontoglires</taxon>
        <taxon>Primates</taxon>
        <taxon>Haplorrhini</taxon>
        <taxon>Catarrhini</taxon>
        <taxon>Cercopithecidae</taxon>
        <taxon>Cercopithecinae</taxon>
        <taxon>Macaca</taxon>
    </lineage>
</organism>
<gene>
    <name type="primary">APOBEC3G</name>
</gene>
<sequence>MKPQFRNTVERMYRGTFFYSFNNRPILSRRNTVWLCYEVKTRGPSMPTWGTKIFRGQVYSKAKYHPEMRFLRWFSKWRQLHHDQEYKVTWYVSWSPCTRCANSVATFLAKDPKVTLTIFVARLYYFWKPDYQQALRILCQKRGGPHATMKIMNYNEFQDCWNKFVDGRGKPFKPRNNLPKHYTLLQATLGELLRHLMDPGTFTSNFNNKPWVSGQHETYLCYKVERLHNDTWVPLNQHRGFLRNQAPNIHGFPKGRHAELCFLDLIPFWKLDGQQYRVTCFTSWSPCFSCAQEMAKFISNNEHVSLCIFAARIYDDQGRYQEGLRTLHRDGAKIAMMNYSEFEYCWDTFVDRQGRPFQPWDGLDEHSQALSERLRAILQNQGN</sequence>
<comment type="function">
    <text evidence="1">DNA deaminase (cytidine deaminase) which acts as an inhibitor of retrovirus replication and retrotransposon mobility. After the penetration of retroviral nucleocapsids into target cells of infection and the initiation of reverse transcription, it can induce the conversion of cytosine to uracil in the minus-sense single-strand viral DNA, leading to G-to-A hypermutations in the subsequent plus-strand viral DNA. The resultant detrimental levels of mutations in the proviral genome, along with a deamination-independent mechanism that works prior to the proviral integration, together exert efficient antiretroviral effects in infected target cells. Selectively targets single-stranded DNA and does not deaminate double-stranded DNA or single- or double-stranded RNA (By similarity).</text>
</comment>
<comment type="catalytic activity">
    <reaction evidence="1">
        <text>a 2'-deoxycytidine in single-stranded DNA + H2O + H(+) = a 2'-deoxyuridine in single-stranded DNA + NH4(+)</text>
        <dbReference type="Rhea" id="RHEA:50948"/>
        <dbReference type="Rhea" id="RHEA-COMP:12846"/>
        <dbReference type="Rhea" id="RHEA-COMP:12847"/>
        <dbReference type="ChEBI" id="CHEBI:15377"/>
        <dbReference type="ChEBI" id="CHEBI:15378"/>
        <dbReference type="ChEBI" id="CHEBI:28938"/>
        <dbReference type="ChEBI" id="CHEBI:85452"/>
        <dbReference type="ChEBI" id="CHEBI:133902"/>
        <dbReference type="EC" id="3.5.4.38"/>
    </reaction>
</comment>
<comment type="cofactor">
    <cofactor evidence="1">
        <name>Zn(2+)</name>
        <dbReference type="ChEBI" id="CHEBI:29105"/>
    </cofactor>
</comment>
<comment type="subunit">
    <text evidence="1">Homodimer. Homooligomer. Can bind RNA to form ribonucleoprotein complexes of high-molecular-mass (HMM) or low-molecular-mass (LMM). HMM is inactive and heterogeneous in protein composition because of binding nonselectively to cellular RNAs, which in turn are associated with variety of cellular proteins. The LMM form which is enzymatically active has few or no RNAs associated. Its ability to form homooligomer is distinct from its ability to assemble into HMM. Interacts with APOBEC3B, APOBEC3F, MOV10, AGO2, EIF4E, EIF4ENIF1, DCP2 and DDX6 in an RNA-dependent manner. Interacts with AGO1, AGO3 and PKA/PRKACA.</text>
</comment>
<comment type="subcellular location">
    <subcellularLocation>
        <location evidence="1">Cytoplasm</location>
    </subcellularLocation>
    <subcellularLocation>
        <location evidence="1">Nucleus</location>
    </subcellularLocation>
    <subcellularLocation>
        <location evidence="1">Cytoplasm</location>
        <location evidence="1">P-body</location>
    </subcellularLocation>
    <text evidence="1">Mainly cytoplasmic, small amount are found in the nucleus.</text>
</comment>
<comment type="domain">
    <text evidence="1">The CMP/dCMP deaminase domain 1 mediates RNA binding, RNA-dependent oligomerization and virion incorporation whereas the CMP/dCMP deaminase domain 2 confers deoxycytidine deaminase activity and substrate sequence specificity.</text>
</comment>
<comment type="similarity">
    <text evidence="3">Belongs to the cytidine and deoxycytidylate deaminase family.</text>
</comment>